<feature type="chain" id="PRO_0000051352" description="tRNA (34-2'-O)-methyltransferase regulator WDR6">
    <location>
        <begin position="1"/>
        <end position="1121"/>
    </location>
</feature>
<feature type="repeat" description="WD 1">
    <location>
        <begin position="53"/>
        <end position="97"/>
    </location>
</feature>
<feature type="repeat" description="WD 2">
    <location>
        <begin position="105"/>
        <end position="143"/>
    </location>
</feature>
<feature type="repeat" description="WD 3">
    <location>
        <begin position="147"/>
        <end position="189"/>
    </location>
</feature>
<feature type="repeat" description="WD 4">
    <location>
        <begin position="200"/>
        <end position="238"/>
    </location>
</feature>
<feature type="repeat" description="WD 5">
    <location>
        <begin position="247"/>
        <end position="285"/>
    </location>
</feature>
<feature type="repeat" description="WD 6">
    <location>
        <begin position="289"/>
        <end position="327"/>
    </location>
</feature>
<feature type="repeat" description="WD 7">
    <location>
        <begin position="335"/>
        <end position="376"/>
    </location>
</feature>
<feature type="repeat" description="WD 8">
    <location>
        <begin position="381"/>
        <end position="422"/>
    </location>
</feature>
<feature type="repeat" description="WD 9">
    <location>
        <begin position="425"/>
        <end position="470"/>
    </location>
</feature>
<feature type="repeat" description="WD 10">
    <location>
        <begin position="476"/>
        <end position="520"/>
    </location>
</feature>
<feature type="repeat" description="WD 11">
    <location>
        <begin position="559"/>
        <end position="598"/>
    </location>
</feature>
<feature type="repeat" description="WD 12">
    <location>
        <begin position="604"/>
        <end position="642"/>
    </location>
</feature>
<feature type="repeat" description="WD 13">
    <location>
        <begin position="645"/>
        <end position="684"/>
    </location>
</feature>
<feature type="repeat" description="WD 14">
    <location>
        <begin position="739"/>
        <end position="785"/>
    </location>
</feature>
<feature type="repeat" description="WD 15">
    <location>
        <begin position="848"/>
        <end position="893"/>
    </location>
</feature>
<feature type="repeat" description="WD 16">
    <location>
        <begin position="901"/>
        <end position="946"/>
    </location>
</feature>
<feature type="repeat" description="WD 17">
    <location>
        <begin position="970"/>
        <end position="1012"/>
    </location>
</feature>
<feature type="repeat" description="WD 18">
    <location>
        <begin position="1036"/>
        <end position="1073"/>
    </location>
</feature>
<feature type="repeat" description="WD 19">
    <location>
        <begin position="1079"/>
        <end position="1121"/>
    </location>
</feature>
<feature type="modified residue" description="N-acetylmethionine" evidence="8">
    <location>
        <position position="1"/>
    </location>
</feature>
<feature type="sequence conflict" description="In Ref. 2; BAG58164." evidence="7" ref="2">
    <original>D</original>
    <variation>N</variation>
    <location>
        <position position="38"/>
    </location>
</feature>
<feature type="sequence conflict" description="In Ref. 2; BAG58164." evidence="7" ref="2">
    <original>S</original>
    <variation>R</variation>
    <location>
        <position position="545"/>
    </location>
</feature>
<feature type="sequence conflict" description="In Ref. 2; BAG58164." evidence="7" ref="2">
    <original>V</original>
    <variation>I</variation>
    <location>
        <position position="651"/>
    </location>
</feature>
<dbReference type="EMBL" id="AF099100">
    <property type="protein sequence ID" value="AAF80244.1"/>
    <property type="molecule type" value="mRNA"/>
</dbReference>
<dbReference type="EMBL" id="AK295145">
    <property type="protein sequence ID" value="BAG58164.1"/>
    <property type="status" value="ALT_INIT"/>
    <property type="molecule type" value="mRNA"/>
</dbReference>
<dbReference type="EMBL" id="AC137630">
    <property type="status" value="NOT_ANNOTATED_CDS"/>
    <property type="molecule type" value="Genomic_DNA"/>
</dbReference>
<dbReference type="EMBL" id="BC101707">
    <property type="protein sequence ID" value="AAI01708.1"/>
    <property type="molecule type" value="mRNA"/>
</dbReference>
<dbReference type="EMBL" id="BC113467">
    <property type="protein sequence ID" value="AAI13468.1"/>
    <property type="molecule type" value="mRNA"/>
</dbReference>
<dbReference type="EMBL" id="AL133589">
    <property type="protein sequence ID" value="CAB63730.1"/>
    <property type="molecule type" value="mRNA"/>
</dbReference>
<dbReference type="CCDS" id="CCDS2782.3"/>
<dbReference type="PIR" id="JC7329">
    <property type="entry name" value="JC7329"/>
</dbReference>
<dbReference type="PIR" id="T43496">
    <property type="entry name" value="T43496"/>
</dbReference>
<dbReference type="RefSeq" id="NP_001307475.1">
    <property type="nucleotide sequence ID" value="NM_001320546.1"/>
</dbReference>
<dbReference type="RefSeq" id="NP_001307476.1">
    <property type="nucleotide sequence ID" value="NM_001320547.1"/>
</dbReference>
<dbReference type="RefSeq" id="NP_060501.3">
    <property type="nucleotide sequence ID" value="NM_018031.4"/>
</dbReference>
<dbReference type="BioGRID" id="116350">
    <property type="interactions" value="343"/>
</dbReference>
<dbReference type="FunCoup" id="Q9NNW5">
    <property type="interactions" value="2363"/>
</dbReference>
<dbReference type="IntAct" id="Q9NNW5">
    <property type="interactions" value="148"/>
</dbReference>
<dbReference type="MINT" id="Q9NNW5"/>
<dbReference type="STRING" id="9606.ENSP00000378857"/>
<dbReference type="GlyGen" id="Q9NNW5">
    <property type="glycosylation" value="2 sites, 1 O-linked glycan (1 site)"/>
</dbReference>
<dbReference type="iPTMnet" id="Q9NNW5"/>
<dbReference type="PhosphoSitePlus" id="Q9NNW5"/>
<dbReference type="SwissPalm" id="Q9NNW5"/>
<dbReference type="BioMuta" id="WDR6"/>
<dbReference type="DMDM" id="12643813"/>
<dbReference type="jPOST" id="Q9NNW5"/>
<dbReference type="MassIVE" id="Q9NNW5"/>
<dbReference type="PaxDb" id="9606-ENSP00000378857"/>
<dbReference type="PeptideAtlas" id="Q9NNW5"/>
<dbReference type="ProteomicsDB" id="81856"/>
<dbReference type="Pumba" id="Q9NNW5"/>
<dbReference type="Antibodypedia" id="13436">
    <property type="antibodies" value="106 antibodies from 26 providers"/>
</dbReference>
<dbReference type="DNASU" id="11180"/>
<dbReference type="Ensembl" id="ENST00000608424.6">
    <property type="protein sequence ID" value="ENSP00000477389.1"/>
    <property type="gene ID" value="ENSG00000178252.19"/>
</dbReference>
<dbReference type="GeneID" id="11180"/>
<dbReference type="KEGG" id="hsa:11180"/>
<dbReference type="MANE-Select" id="ENST00000608424.6">
    <property type="protein sequence ID" value="ENSP00000477389.1"/>
    <property type="RefSeq nucleotide sequence ID" value="NM_018031.6"/>
    <property type="RefSeq protein sequence ID" value="NP_060501.4"/>
</dbReference>
<dbReference type="UCSC" id="uc062job.1">
    <property type="organism name" value="human"/>
</dbReference>
<dbReference type="AGR" id="HGNC:12758"/>
<dbReference type="CTD" id="11180"/>
<dbReference type="DisGeNET" id="11180"/>
<dbReference type="GeneCards" id="WDR6"/>
<dbReference type="HGNC" id="HGNC:12758">
    <property type="gene designation" value="WDR6"/>
</dbReference>
<dbReference type="HPA" id="ENSG00000178252">
    <property type="expression patterns" value="Low tissue specificity"/>
</dbReference>
<dbReference type="MIM" id="606031">
    <property type="type" value="gene"/>
</dbReference>
<dbReference type="neXtProt" id="NX_Q9NNW5"/>
<dbReference type="OpenTargets" id="ENSG00000178252"/>
<dbReference type="PharmGKB" id="PA37362"/>
<dbReference type="VEuPathDB" id="HostDB:ENSG00000178252"/>
<dbReference type="eggNOG" id="KOG0974">
    <property type="taxonomic scope" value="Eukaryota"/>
</dbReference>
<dbReference type="GeneTree" id="ENSGT00420000029923"/>
<dbReference type="HOGENOM" id="CLU_002615_0_0_1"/>
<dbReference type="InParanoid" id="Q9NNW5"/>
<dbReference type="OrthoDB" id="5594999at2759"/>
<dbReference type="PAN-GO" id="Q9NNW5">
    <property type="GO annotations" value="2 GO annotations based on evolutionary models"/>
</dbReference>
<dbReference type="PhylomeDB" id="Q9NNW5"/>
<dbReference type="TreeFam" id="TF313984"/>
<dbReference type="PathwayCommons" id="Q9NNW5"/>
<dbReference type="Reactome" id="R-HSA-9013420">
    <property type="pathway name" value="RHOU GTPase cycle"/>
</dbReference>
<dbReference type="Reactome" id="R-HSA-9013424">
    <property type="pathway name" value="RHOV GTPase cycle"/>
</dbReference>
<dbReference type="Reactome" id="R-HSA-9696264">
    <property type="pathway name" value="RND3 GTPase cycle"/>
</dbReference>
<dbReference type="Reactome" id="R-HSA-9696270">
    <property type="pathway name" value="RND2 GTPase cycle"/>
</dbReference>
<dbReference type="Reactome" id="R-HSA-9696273">
    <property type="pathway name" value="RND1 GTPase cycle"/>
</dbReference>
<dbReference type="SignaLink" id="Q9NNW5"/>
<dbReference type="BioGRID-ORCS" id="11180">
    <property type="hits" value="24 hits in 1164 CRISPR screens"/>
</dbReference>
<dbReference type="ChiTaRS" id="WDR6">
    <property type="organism name" value="human"/>
</dbReference>
<dbReference type="GeneWiki" id="WDR6"/>
<dbReference type="GenomeRNAi" id="11180"/>
<dbReference type="Pharos" id="Q9NNW5">
    <property type="development level" value="Tbio"/>
</dbReference>
<dbReference type="PRO" id="PR:Q9NNW5"/>
<dbReference type="Proteomes" id="UP000005640">
    <property type="component" value="Chromosome 3"/>
</dbReference>
<dbReference type="RNAct" id="Q9NNW5">
    <property type="molecule type" value="protein"/>
</dbReference>
<dbReference type="Bgee" id="ENSG00000178252">
    <property type="expression patterns" value="Expressed in right uterine tube and 197 other cell types or tissues"/>
</dbReference>
<dbReference type="ExpressionAtlas" id="Q9NNW5">
    <property type="expression patterns" value="baseline and differential"/>
</dbReference>
<dbReference type="GO" id="GO:0005737">
    <property type="term" value="C:cytoplasm"/>
    <property type="evidence" value="ECO:0000314"/>
    <property type="project" value="UniProtKB"/>
</dbReference>
<dbReference type="GO" id="GO:0005829">
    <property type="term" value="C:cytosol"/>
    <property type="evidence" value="ECO:0000314"/>
    <property type="project" value="HPA"/>
</dbReference>
<dbReference type="GO" id="GO:0005886">
    <property type="term" value="C:plasma membrane"/>
    <property type="evidence" value="ECO:0000314"/>
    <property type="project" value="HPA"/>
</dbReference>
<dbReference type="GO" id="GO:0030234">
    <property type="term" value="F:enzyme regulator activity"/>
    <property type="evidence" value="ECO:0000314"/>
    <property type="project" value="UniProtKB"/>
</dbReference>
<dbReference type="GO" id="GO:0003723">
    <property type="term" value="F:RNA binding"/>
    <property type="evidence" value="ECO:0007005"/>
    <property type="project" value="UniProtKB"/>
</dbReference>
<dbReference type="GO" id="GO:0000049">
    <property type="term" value="F:tRNA binding"/>
    <property type="evidence" value="ECO:0000314"/>
    <property type="project" value="UniProtKB"/>
</dbReference>
<dbReference type="GO" id="GO:0070314">
    <property type="term" value="P:G1 to G0 transition"/>
    <property type="evidence" value="ECO:0000353"/>
    <property type="project" value="UniProtKB"/>
</dbReference>
<dbReference type="GO" id="GO:0010507">
    <property type="term" value="P:negative regulation of autophagy"/>
    <property type="evidence" value="ECO:0000315"/>
    <property type="project" value="BHF-UCL"/>
</dbReference>
<dbReference type="GO" id="GO:0008285">
    <property type="term" value="P:negative regulation of cell population proliferation"/>
    <property type="evidence" value="ECO:0000314"/>
    <property type="project" value="UniProtKB"/>
</dbReference>
<dbReference type="GO" id="GO:0030488">
    <property type="term" value="P:tRNA methylation"/>
    <property type="evidence" value="ECO:0000318"/>
    <property type="project" value="GO_Central"/>
</dbReference>
<dbReference type="GO" id="GO:0002130">
    <property type="term" value="P:wobble position ribose methylation"/>
    <property type="evidence" value="ECO:0000314"/>
    <property type="project" value="UniProtKB"/>
</dbReference>
<dbReference type="FunFam" id="2.130.10.10:FF:000719">
    <property type="entry name" value="WD repeat-containing protein 6"/>
    <property type="match status" value="1"/>
</dbReference>
<dbReference type="FunFam" id="2.130.10.10:FF:000759">
    <property type="entry name" value="WD repeat-containing protein 6"/>
    <property type="match status" value="1"/>
</dbReference>
<dbReference type="FunFam" id="2.130.10.10:FF:000806">
    <property type="entry name" value="WD repeat-containing protein 6"/>
    <property type="match status" value="1"/>
</dbReference>
<dbReference type="FunFam" id="2.130.10.10:FF:000901">
    <property type="entry name" value="WD repeat-containing protein 6"/>
    <property type="match status" value="1"/>
</dbReference>
<dbReference type="Gene3D" id="2.130.10.10">
    <property type="entry name" value="YVTN repeat-like/Quinoprotein amine dehydrogenase"/>
    <property type="match status" value="3"/>
</dbReference>
<dbReference type="InterPro" id="IPR011043">
    <property type="entry name" value="Gal_Oxase/kelch_b-propeller"/>
</dbReference>
<dbReference type="InterPro" id="IPR051973">
    <property type="entry name" value="tRNA_Anticodon_Mtase-Reg"/>
</dbReference>
<dbReference type="InterPro" id="IPR015943">
    <property type="entry name" value="WD40/YVTN_repeat-like_dom_sf"/>
</dbReference>
<dbReference type="InterPro" id="IPR036322">
    <property type="entry name" value="WD40_repeat_dom_sf"/>
</dbReference>
<dbReference type="InterPro" id="IPR001680">
    <property type="entry name" value="WD40_rpt"/>
</dbReference>
<dbReference type="PANTHER" id="PTHR14344">
    <property type="entry name" value="WD REPEAT PROTEIN"/>
    <property type="match status" value="1"/>
</dbReference>
<dbReference type="PANTHER" id="PTHR14344:SF3">
    <property type="entry name" value="WD REPEAT-CONTAINING PROTEIN 6"/>
    <property type="match status" value="1"/>
</dbReference>
<dbReference type="Pfam" id="PF00400">
    <property type="entry name" value="WD40"/>
    <property type="match status" value="3"/>
</dbReference>
<dbReference type="SMART" id="SM00320">
    <property type="entry name" value="WD40"/>
    <property type="match status" value="7"/>
</dbReference>
<dbReference type="SUPFAM" id="SSF50965">
    <property type="entry name" value="Galactose oxidase, central domain"/>
    <property type="match status" value="1"/>
</dbReference>
<dbReference type="SUPFAM" id="SSF50978">
    <property type="entry name" value="WD40 repeat-like"/>
    <property type="match status" value="2"/>
</dbReference>
<dbReference type="PROSITE" id="PS00678">
    <property type="entry name" value="WD_REPEATS_1"/>
    <property type="match status" value="1"/>
</dbReference>
<dbReference type="PROSITE" id="PS50082">
    <property type="entry name" value="WD_REPEATS_2"/>
    <property type="match status" value="1"/>
</dbReference>
<dbReference type="PROSITE" id="PS50294">
    <property type="entry name" value="WD_REPEATS_REGION"/>
    <property type="match status" value="1"/>
</dbReference>
<evidence type="ECO:0000250" key="1">
    <source>
        <dbReference type="UniProtKB" id="Q5XFW6"/>
    </source>
</evidence>
<evidence type="ECO:0000269" key="2">
    <source>
    </source>
</evidence>
<evidence type="ECO:0000269" key="3">
    <source>
    </source>
</evidence>
<evidence type="ECO:0000269" key="4">
    <source>
    </source>
</evidence>
<evidence type="ECO:0000269" key="5">
    <source>
    </source>
</evidence>
<evidence type="ECO:0000269" key="6">
    <source>
    </source>
</evidence>
<evidence type="ECO:0000305" key="7"/>
<evidence type="ECO:0007744" key="8">
    <source>
    </source>
</evidence>
<sequence length="1121" mass="121725">MDALEDYVWPRATSELILLPVTGLECVGDRLLAGEGPDVLVYSLDFGGHLRMIKRVQNLLGHYLIHGFRVRPEPNGDLDLEAMVAVFGSKGLRVVKISWGQGHFWELWRSGLWNMSDWIWDARWLEGNIALALGHNSVVLYDPVVGCILQEVPCTDRCTLSSACLIGDAWKELTIVAGAVSNQLLVWYPATALADNKPVAPDRRISGHVGIIFSMSYLESKGLLATASEDRSVRIWKVGDLRVPGGRVQNIGHCFGHSARVWQVKLLENYLISAGEDCVCLVWSHEGEILQAFRGHQGRGIRAIAAHERQAWVITGGDDSGIRLWHLVGRGYRGLGVSALCFKSRSRPGTLKAVTLAGSWRLLAVTDTGALYLYDVEVKCWEQLLEDKHFQSYCLLEAAPGPEGFGLCAMANGEGRVKVVPINTPTAAVDQTLFPGKVHSLSWALRGYEELLLLASGPGGVVACLEISAAPSGKAIFVKERCRYLLPPSKQRWHTCSAFLPPGDFLVCGDRRGSVLLFPSRPGLLKDPGVGGKARAGAGAPVVGSGSSGGGNAFTGLGPVSTLPSLHGKQGVTSVTCHGGYVYTTGRDGAYYQLFVRDGQLQPVLRQKSCRGMNWLAGLRIVPDGSMVILGFHANEFVVWNPRSHEKLHIVNCGGGHRSWAFSDTEAAMAFAYLKDGDVMLYRALGGCTRPHVILREGLHGREITCVKRVGTITLGPEYGVPSFMQPDDLEPGSEGPDLTDIVITCSEDTTVCVLALPTTTGSAHALTAVCNHISSVRAVAVWGIGTPGGPQDPQPGLTAHVVSAGGRAEMHCFSIMVTPDPSTPSRLACHVMHLSSHRLDEYWDRQRNRHRMVKVDPETRYMSLAVCELDQPGLGPLVAAACSDGAVRLFLLQDSGRILQLLAETFHHKRCVLKVHSFTHEAPNQRRRLLLCSAATDGSLAFWDLTTMLDHDSTVLEPPVDPGLPYRLGTPSLTLQAHSCGINSLHTLPTREGHHLVASGSEDGSLHVFVLAVEMLQLEEAVGEAGLVPQLRVLEEYSVPCAHAAHVTGLKILSPSIMVSASIDQRLTFWRLGHGEPTFMNSTVFHVPDVADMDCWPVSPEFGHRCALGGQGLEVYNWYD</sequence>
<reference key="1">
    <citation type="journal article" date="2000" name="Biochem. Biophys. Res. Commun.">
        <title>Molecular cloning, expression analysis, and chromosome mapping of WDR6, a novel human WD-repeat gene.</title>
        <authorList>
            <person name="Li D."/>
            <person name="Burch P."/>
            <person name="Gonzalez O."/>
            <person name="Kashork C.D."/>
            <person name="Shaffer L.G."/>
            <person name="Bachinski L.L."/>
            <person name="Roberts R."/>
        </authorList>
    </citation>
    <scope>NUCLEOTIDE SEQUENCE [MRNA]</scope>
    <scope>TISSUE SPECIFICITY</scope>
    <source>
        <tissue>Heart atrium</tissue>
    </source>
</reference>
<reference key="2">
    <citation type="journal article" date="2004" name="Nat. Genet.">
        <title>Complete sequencing and characterization of 21,243 full-length human cDNAs.</title>
        <authorList>
            <person name="Ota T."/>
            <person name="Suzuki Y."/>
            <person name="Nishikawa T."/>
            <person name="Otsuki T."/>
            <person name="Sugiyama T."/>
            <person name="Irie R."/>
            <person name="Wakamatsu A."/>
            <person name="Hayashi K."/>
            <person name="Sato H."/>
            <person name="Nagai K."/>
            <person name="Kimura K."/>
            <person name="Makita H."/>
            <person name="Sekine M."/>
            <person name="Obayashi M."/>
            <person name="Nishi T."/>
            <person name="Shibahara T."/>
            <person name="Tanaka T."/>
            <person name="Ishii S."/>
            <person name="Yamamoto J."/>
            <person name="Saito K."/>
            <person name="Kawai Y."/>
            <person name="Isono Y."/>
            <person name="Nakamura Y."/>
            <person name="Nagahari K."/>
            <person name="Murakami K."/>
            <person name="Yasuda T."/>
            <person name="Iwayanagi T."/>
            <person name="Wagatsuma M."/>
            <person name="Shiratori A."/>
            <person name="Sudo H."/>
            <person name="Hosoiri T."/>
            <person name="Kaku Y."/>
            <person name="Kodaira H."/>
            <person name="Kondo H."/>
            <person name="Sugawara M."/>
            <person name="Takahashi M."/>
            <person name="Kanda K."/>
            <person name="Yokoi T."/>
            <person name="Furuya T."/>
            <person name="Kikkawa E."/>
            <person name="Omura Y."/>
            <person name="Abe K."/>
            <person name="Kamihara K."/>
            <person name="Katsuta N."/>
            <person name="Sato K."/>
            <person name="Tanikawa M."/>
            <person name="Yamazaki M."/>
            <person name="Ninomiya K."/>
            <person name="Ishibashi T."/>
            <person name="Yamashita H."/>
            <person name="Murakawa K."/>
            <person name="Fujimori K."/>
            <person name="Tanai H."/>
            <person name="Kimata M."/>
            <person name="Watanabe M."/>
            <person name="Hiraoka S."/>
            <person name="Chiba Y."/>
            <person name="Ishida S."/>
            <person name="Ono Y."/>
            <person name="Takiguchi S."/>
            <person name="Watanabe S."/>
            <person name="Yosida M."/>
            <person name="Hotuta T."/>
            <person name="Kusano J."/>
            <person name="Kanehori K."/>
            <person name="Takahashi-Fujii A."/>
            <person name="Hara H."/>
            <person name="Tanase T.-O."/>
            <person name="Nomura Y."/>
            <person name="Togiya S."/>
            <person name="Komai F."/>
            <person name="Hara R."/>
            <person name="Takeuchi K."/>
            <person name="Arita M."/>
            <person name="Imose N."/>
            <person name="Musashino K."/>
            <person name="Yuuki H."/>
            <person name="Oshima A."/>
            <person name="Sasaki N."/>
            <person name="Aotsuka S."/>
            <person name="Yoshikawa Y."/>
            <person name="Matsunawa H."/>
            <person name="Ichihara T."/>
            <person name="Shiohata N."/>
            <person name="Sano S."/>
            <person name="Moriya S."/>
            <person name="Momiyama H."/>
            <person name="Satoh N."/>
            <person name="Takami S."/>
            <person name="Terashima Y."/>
            <person name="Suzuki O."/>
            <person name="Nakagawa S."/>
            <person name="Senoh A."/>
            <person name="Mizoguchi H."/>
            <person name="Goto Y."/>
            <person name="Shimizu F."/>
            <person name="Wakebe H."/>
            <person name="Hishigaki H."/>
            <person name="Watanabe T."/>
            <person name="Sugiyama A."/>
            <person name="Takemoto M."/>
            <person name="Kawakami B."/>
            <person name="Yamazaki M."/>
            <person name="Watanabe K."/>
            <person name="Kumagai A."/>
            <person name="Itakura S."/>
            <person name="Fukuzumi Y."/>
            <person name="Fujimori Y."/>
            <person name="Komiyama M."/>
            <person name="Tashiro H."/>
            <person name="Tanigami A."/>
            <person name="Fujiwara T."/>
            <person name="Ono T."/>
            <person name="Yamada K."/>
            <person name="Fujii Y."/>
            <person name="Ozaki K."/>
            <person name="Hirao M."/>
            <person name="Ohmori Y."/>
            <person name="Kawabata A."/>
            <person name="Hikiji T."/>
            <person name="Kobatake N."/>
            <person name="Inagaki H."/>
            <person name="Ikema Y."/>
            <person name="Okamoto S."/>
            <person name="Okitani R."/>
            <person name="Kawakami T."/>
            <person name="Noguchi S."/>
            <person name="Itoh T."/>
            <person name="Shigeta K."/>
            <person name="Senba T."/>
            <person name="Matsumura K."/>
            <person name="Nakajima Y."/>
            <person name="Mizuno T."/>
            <person name="Morinaga M."/>
            <person name="Sasaki M."/>
            <person name="Togashi T."/>
            <person name="Oyama M."/>
            <person name="Hata H."/>
            <person name="Watanabe M."/>
            <person name="Komatsu T."/>
            <person name="Mizushima-Sugano J."/>
            <person name="Satoh T."/>
            <person name="Shirai Y."/>
            <person name="Takahashi Y."/>
            <person name="Nakagawa K."/>
            <person name="Okumura K."/>
            <person name="Nagase T."/>
            <person name="Nomura N."/>
            <person name="Kikuchi H."/>
            <person name="Masuho Y."/>
            <person name="Yamashita R."/>
            <person name="Nakai K."/>
            <person name="Yada T."/>
            <person name="Nakamura Y."/>
            <person name="Ohara O."/>
            <person name="Isogai T."/>
            <person name="Sugano S."/>
        </authorList>
    </citation>
    <scope>NUCLEOTIDE SEQUENCE [LARGE SCALE MRNA]</scope>
    <source>
        <tissue>Brain</tissue>
    </source>
</reference>
<reference key="3">
    <citation type="journal article" date="2006" name="Nature">
        <title>The DNA sequence, annotation and analysis of human chromosome 3.</title>
        <authorList>
            <person name="Muzny D.M."/>
            <person name="Scherer S.E."/>
            <person name="Kaul R."/>
            <person name="Wang J."/>
            <person name="Yu J."/>
            <person name="Sudbrak R."/>
            <person name="Buhay C.J."/>
            <person name="Chen R."/>
            <person name="Cree A."/>
            <person name="Ding Y."/>
            <person name="Dugan-Rocha S."/>
            <person name="Gill R."/>
            <person name="Gunaratne P."/>
            <person name="Harris R.A."/>
            <person name="Hawes A.C."/>
            <person name="Hernandez J."/>
            <person name="Hodgson A.V."/>
            <person name="Hume J."/>
            <person name="Jackson A."/>
            <person name="Khan Z.M."/>
            <person name="Kovar-Smith C."/>
            <person name="Lewis L.R."/>
            <person name="Lozado R.J."/>
            <person name="Metzker M.L."/>
            <person name="Milosavljevic A."/>
            <person name="Miner G.R."/>
            <person name="Morgan M.B."/>
            <person name="Nazareth L.V."/>
            <person name="Scott G."/>
            <person name="Sodergren E."/>
            <person name="Song X.-Z."/>
            <person name="Steffen D."/>
            <person name="Wei S."/>
            <person name="Wheeler D.A."/>
            <person name="Wright M.W."/>
            <person name="Worley K.C."/>
            <person name="Yuan Y."/>
            <person name="Zhang Z."/>
            <person name="Adams C.Q."/>
            <person name="Ansari-Lari M.A."/>
            <person name="Ayele M."/>
            <person name="Brown M.J."/>
            <person name="Chen G."/>
            <person name="Chen Z."/>
            <person name="Clendenning J."/>
            <person name="Clerc-Blankenburg K.P."/>
            <person name="Chen R."/>
            <person name="Chen Z."/>
            <person name="Davis C."/>
            <person name="Delgado O."/>
            <person name="Dinh H.H."/>
            <person name="Dong W."/>
            <person name="Draper H."/>
            <person name="Ernst S."/>
            <person name="Fu G."/>
            <person name="Gonzalez-Garay M.L."/>
            <person name="Garcia D.K."/>
            <person name="Gillett W."/>
            <person name="Gu J."/>
            <person name="Hao B."/>
            <person name="Haugen E."/>
            <person name="Havlak P."/>
            <person name="He X."/>
            <person name="Hennig S."/>
            <person name="Hu S."/>
            <person name="Huang W."/>
            <person name="Jackson L.R."/>
            <person name="Jacob L.S."/>
            <person name="Kelly S.H."/>
            <person name="Kube M."/>
            <person name="Levy R."/>
            <person name="Li Z."/>
            <person name="Liu B."/>
            <person name="Liu J."/>
            <person name="Liu W."/>
            <person name="Lu J."/>
            <person name="Maheshwari M."/>
            <person name="Nguyen B.-V."/>
            <person name="Okwuonu G.O."/>
            <person name="Palmeiri A."/>
            <person name="Pasternak S."/>
            <person name="Perez L.M."/>
            <person name="Phelps K.A."/>
            <person name="Plopper F.J."/>
            <person name="Qiang B."/>
            <person name="Raymond C."/>
            <person name="Rodriguez R."/>
            <person name="Saenphimmachak C."/>
            <person name="Santibanez J."/>
            <person name="Shen H."/>
            <person name="Shen Y."/>
            <person name="Subramanian S."/>
            <person name="Tabor P.E."/>
            <person name="Verduzco D."/>
            <person name="Waldron L."/>
            <person name="Wang J."/>
            <person name="Wang J."/>
            <person name="Wang Q."/>
            <person name="Williams G.A."/>
            <person name="Wong G.K.-S."/>
            <person name="Yao Z."/>
            <person name="Zhang J."/>
            <person name="Zhang X."/>
            <person name="Zhao G."/>
            <person name="Zhou J."/>
            <person name="Zhou Y."/>
            <person name="Nelson D."/>
            <person name="Lehrach H."/>
            <person name="Reinhardt R."/>
            <person name="Naylor S.L."/>
            <person name="Yang H."/>
            <person name="Olson M."/>
            <person name="Weinstock G."/>
            <person name="Gibbs R.A."/>
        </authorList>
    </citation>
    <scope>NUCLEOTIDE SEQUENCE [LARGE SCALE GENOMIC DNA]</scope>
</reference>
<reference key="4">
    <citation type="journal article" date="2004" name="Genome Res.">
        <title>The status, quality, and expansion of the NIH full-length cDNA project: the Mammalian Gene Collection (MGC).</title>
        <authorList>
            <consortium name="The MGC Project Team"/>
        </authorList>
    </citation>
    <scope>NUCLEOTIDE SEQUENCE [LARGE SCALE MRNA]</scope>
    <source>
        <tissue>Brain</tissue>
    </source>
</reference>
<reference key="5">
    <citation type="journal article" date="2007" name="BMC Genomics">
        <title>The full-ORF clone resource of the German cDNA consortium.</title>
        <authorList>
            <person name="Bechtel S."/>
            <person name="Rosenfelder H."/>
            <person name="Duda A."/>
            <person name="Schmidt C.P."/>
            <person name="Ernst U."/>
            <person name="Wellenreuther R."/>
            <person name="Mehrle A."/>
            <person name="Schuster C."/>
            <person name="Bahr A."/>
            <person name="Bloecker H."/>
            <person name="Heubner D."/>
            <person name="Hoerlein A."/>
            <person name="Michel G."/>
            <person name="Wedler H."/>
            <person name="Koehrer K."/>
            <person name="Ottenwaelder B."/>
            <person name="Poustka A."/>
            <person name="Wiemann S."/>
            <person name="Schupp I."/>
        </authorList>
    </citation>
    <scope>NUCLEOTIDE SEQUENCE [LARGE SCALE MRNA] OF 618-1121</scope>
    <source>
        <tissue>Testis</tissue>
    </source>
</reference>
<reference key="6">
    <citation type="journal article" date="2007" name="Mol. Cell. Biochem.">
        <title>Association of LKB1 with a WD-repeat protein WDR6 is implicated in cell growth arrest and p27(Kip1) induction.</title>
        <authorList>
            <person name="Xie X."/>
            <person name="Wang Z."/>
            <person name="Chen Y."/>
        </authorList>
    </citation>
    <scope>FUNCTION</scope>
    <scope>INTERACTION WITH STK11/LKB1</scope>
    <scope>SUBCELLULAR LOCATION</scope>
</reference>
<reference key="7">
    <citation type="journal article" date="2012" name="EMBO J.">
        <title>Genome-wide siRNA screen reveals amino acid starvation-induced autophagy requires SCOC and WAC.</title>
        <authorList>
            <person name="McKnight N.C."/>
            <person name="Jefferies H.B."/>
            <person name="Alemu E.A."/>
            <person name="Saunders R.E."/>
            <person name="Howell M."/>
            <person name="Johansen T."/>
            <person name="Tooze S.A."/>
        </authorList>
    </citation>
    <scope>FUNCTION</scope>
</reference>
<reference key="8">
    <citation type="journal article" date="2012" name="Mol. Cell. Proteomics">
        <title>Comparative large-scale characterisation of plant vs. mammal proteins reveals similar and idiosyncratic N-alpha acetylation features.</title>
        <authorList>
            <person name="Bienvenut W.V."/>
            <person name="Sumpton D."/>
            <person name="Martinez A."/>
            <person name="Lilla S."/>
            <person name="Espagne C."/>
            <person name="Meinnel T."/>
            <person name="Giglione C."/>
        </authorList>
    </citation>
    <scope>ACETYLATION [LARGE SCALE ANALYSIS] AT MET-1</scope>
    <scope>IDENTIFICATION BY MASS SPECTROMETRY [LARGE SCALE ANALYSIS]</scope>
</reference>
<reference key="9">
    <citation type="journal article" date="2020" name="EMBO Rep.">
        <title>Intellectual disability-associated gene ftsj1 is responsible for 2'-O-methylation of specific tRNAs.</title>
        <authorList>
            <person name="Li J."/>
            <person name="Wang Y.N."/>
            <person name="Xu B.S."/>
            <person name="Liu Y.P."/>
            <person name="Zhou M."/>
            <person name="Long T."/>
            <person name="Li H."/>
            <person name="Dong H."/>
            <person name="Nie Y."/>
            <person name="Chen P.R."/>
            <person name="Wang E.D."/>
            <person name="Liu R.J."/>
        </authorList>
    </citation>
    <scope>FUNCTION</scope>
    <scope>INTERACTION WITH FTSJ1</scope>
</reference>
<reference key="10">
    <citation type="journal article" date="2021" name="Sci. Adv.">
        <title>Loss of Ftsj1 perturbs codon-specific translation efficiency in the brain and is associated with X-linked intellectual disability.</title>
        <authorList>
            <person name="Nagayoshi Y."/>
            <person name="Chujo T."/>
            <person name="Hirata S."/>
            <person name="Nakatsuka H."/>
            <person name="Chen C.W."/>
            <person name="Takakura M."/>
            <person name="Miyauchi K."/>
            <person name="Ikeuchi Y."/>
            <person name="Carlyle B.C."/>
            <person name="Kitchen R.R."/>
            <person name="Suzuki T."/>
            <person name="Katsuoka F."/>
            <person name="Yamamoto M."/>
            <person name="Goto Y."/>
            <person name="Tanaka M."/>
            <person name="Natsume K."/>
            <person name="Nairn A.C."/>
            <person name="Suzuki T."/>
            <person name="Tomizawa K."/>
            <person name="Wei F.Y."/>
        </authorList>
    </citation>
    <scope>FUNCTION</scope>
    <scope>INTERACTION WITH FTSJ1</scope>
</reference>
<name>WDR6_HUMAN</name>
<protein>
    <recommendedName>
        <fullName evidence="7">tRNA (34-2'-O)-methyltransferase regulator WDR6</fullName>
    </recommendedName>
    <alternativeName>
        <fullName>WD repeat-containing protein 6</fullName>
    </alternativeName>
</protein>
<accession>Q9NNW5</accession>
<accession>B4DHK2</accession>
<accession>Q3MIT1</accession>
<accession>Q9UF63</accession>
<gene>
    <name type="primary">WDR6</name>
</gene>
<organism>
    <name type="scientific">Homo sapiens</name>
    <name type="common">Human</name>
    <dbReference type="NCBI Taxonomy" id="9606"/>
    <lineage>
        <taxon>Eukaryota</taxon>
        <taxon>Metazoa</taxon>
        <taxon>Chordata</taxon>
        <taxon>Craniata</taxon>
        <taxon>Vertebrata</taxon>
        <taxon>Euteleostomi</taxon>
        <taxon>Mammalia</taxon>
        <taxon>Eutheria</taxon>
        <taxon>Euarchontoglires</taxon>
        <taxon>Primates</taxon>
        <taxon>Haplorrhini</taxon>
        <taxon>Catarrhini</taxon>
        <taxon>Hominidae</taxon>
        <taxon>Homo</taxon>
    </lineage>
</organism>
<proteinExistence type="evidence at protein level"/>
<keyword id="KW-0007">Acetylation</keyword>
<keyword id="KW-0131">Cell cycle</keyword>
<keyword id="KW-0963">Cytoplasm</keyword>
<keyword id="KW-1267">Proteomics identification</keyword>
<keyword id="KW-1185">Reference proteome</keyword>
<keyword id="KW-0677">Repeat</keyword>
<keyword id="KW-0819">tRNA processing</keyword>
<keyword id="KW-0853">WD repeat</keyword>
<comment type="function">
    <text evidence="3 4 5 6">Together with methyltransferase FTSJ1, methylates the 2'-O-ribose of nucleotides at position 34 of the tRNA anticodon loop of substrate tRNAs (PubMed:32558197, PubMed:33771871). Required for the correct positioning of the substrate tRNA for methylation (PubMed:32558197). Required to suppress amino acid starvation-induced autophagy (PubMed:22354037). Enhances the STK11/LKB1-induced cell growth suppression activity (PubMed:17216128).</text>
</comment>
<comment type="subunit">
    <text evidence="1 3 5 6">Interacts with FTSJ1; the interaction is direct, and required for 2'-O-methylation of position 34 in substrate tRNAs (PubMed:32558197, PubMed:33771871). Interacts with IRS4 (By similarity). Interacts with STK11/LKB1 (PubMed:17216128).</text>
</comment>
<comment type="interaction">
    <interactant intactId="EBI-1568315">
        <id>Q9NNW5</id>
    </interactant>
    <interactant intactId="EBI-12193965">
        <id>Q9Y3R0-3</id>
        <label>GRIP1</label>
    </interactant>
    <organismsDiffer>false</organismsDiffer>
    <experiments>3</experiments>
</comment>
<comment type="interaction">
    <interactant intactId="EBI-1568315">
        <id>Q9NNW5</id>
    </interactant>
    <interactant intactId="EBI-1047946">
        <id>P26045</id>
        <label>PTPN3</label>
    </interactant>
    <organismsDiffer>false</organismsDiffer>
    <experiments>6</experiments>
</comment>
<comment type="interaction">
    <interactant intactId="EBI-1568315">
        <id>Q9NNW5</id>
    </interactant>
    <interactant intactId="EBI-306838">
        <id>Q15831</id>
        <label>STK11</label>
    </interactant>
    <organismsDiffer>false</organismsDiffer>
    <experiments>3</experiments>
</comment>
<comment type="subcellular location">
    <subcellularLocation>
        <location evidence="3">Cytoplasm</location>
    </subcellularLocation>
    <text evidence="3">Colocalizes in the cytoplasm with STK11/LKB1.</text>
</comment>
<comment type="tissue specificity">
    <text evidence="2">Ubiquitous.</text>
</comment>
<comment type="similarity">
    <text evidence="7">Belongs to the WD repeat WDR6 family.</text>
</comment>
<comment type="sequence caution" evidence="7">
    <conflict type="erroneous initiation">
        <sequence resource="EMBL-CDS" id="BAG58164"/>
    </conflict>
    <text>Extended N-terminus.</text>
</comment>